<organism>
    <name type="scientific">Salmonella enteritidis PT4 (strain P125109)</name>
    <dbReference type="NCBI Taxonomy" id="550537"/>
    <lineage>
        <taxon>Bacteria</taxon>
        <taxon>Pseudomonadati</taxon>
        <taxon>Pseudomonadota</taxon>
        <taxon>Gammaproteobacteria</taxon>
        <taxon>Enterobacterales</taxon>
        <taxon>Enterobacteriaceae</taxon>
        <taxon>Salmonella</taxon>
    </lineage>
</organism>
<reference key="1">
    <citation type="journal article" date="2008" name="Genome Res.">
        <title>Comparative genome analysis of Salmonella enteritidis PT4 and Salmonella gallinarum 287/91 provides insights into evolutionary and host adaptation pathways.</title>
        <authorList>
            <person name="Thomson N.R."/>
            <person name="Clayton D.J."/>
            <person name="Windhorst D."/>
            <person name="Vernikos G."/>
            <person name="Davidson S."/>
            <person name="Churcher C."/>
            <person name="Quail M.A."/>
            <person name="Stevens M."/>
            <person name="Jones M.A."/>
            <person name="Watson M."/>
            <person name="Barron A."/>
            <person name="Layton A."/>
            <person name="Pickard D."/>
            <person name="Kingsley R.A."/>
            <person name="Bignell A."/>
            <person name="Clark L."/>
            <person name="Harris B."/>
            <person name="Ormond D."/>
            <person name="Abdellah Z."/>
            <person name="Brooks K."/>
            <person name="Cherevach I."/>
            <person name="Chillingworth T."/>
            <person name="Woodward J."/>
            <person name="Norberczak H."/>
            <person name="Lord A."/>
            <person name="Arrowsmith C."/>
            <person name="Jagels K."/>
            <person name="Moule S."/>
            <person name="Mungall K."/>
            <person name="Saunders M."/>
            <person name="Whitehead S."/>
            <person name="Chabalgoity J.A."/>
            <person name="Maskell D."/>
            <person name="Humphreys T."/>
            <person name="Roberts M."/>
            <person name="Barrow P.A."/>
            <person name="Dougan G."/>
            <person name="Parkhill J."/>
        </authorList>
    </citation>
    <scope>NUCLEOTIDE SEQUENCE [LARGE SCALE GENOMIC DNA]</scope>
    <source>
        <strain>P125109</strain>
    </source>
</reference>
<accession>B5R1Q8</accession>
<dbReference type="EMBL" id="AM933172">
    <property type="protein sequence ID" value="CAR31659.1"/>
    <property type="molecule type" value="Genomic_DNA"/>
</dbReference>
<dbReference type="RefSeq" id="WP_000122863.1">
    <property type="nucleotide sequence ID" value="NC_011294.1"/>
</dbReference>
<dbReference type="SMR" id="B5R1Q8"/>
<dbReference type="KEGG" id="set:SEN0069"/>
<dbReference type="HOGENOM" id="CLU_064827_4_2_6"/>
<dbReference type="UniPathway" id="UPA00117"/>
<dbReference type="Proteomes" id="UP000000613">
    <property type="component" value="Chromosome"/>
</dbReference>
<dbReference type="GO" id="GO:0016740">
    <property type="term" value="F:transferase activity"/>
    <property type="evidence" value="ECO:0007669"/>
    <property type="project" value="UniProtKB-KW"/>
</dbReference>
<dbReference type="GO" id="GO:0009437">
    <property type="term" value="P:carnitine metabolic process"/>
    <property type="evidence" value="ECO:0007669"/>
    <property type="project" value="UniProtKB-UniRule"/>
</dbReference>
<dbReference type="CDD" id="cd04745">
    <property type="entry name" value="LbH_paaY_like"/>
    <property type="match status" value="1"/>
</dbReference>
<dbReference type="FunFam" id="2.160.10.10:FF:000012">
    <property type="entry name" value="Carnitine operon protein CaiE"/>
    <property type="match status" value="1"/>
</dbReference>
<dbReference type="Gene3D" id="2.160.10.10">
    <property type="entry name" value="Hexapeptide repeat proteins"/>
    <property type="match status" value="1"/>
</dbReference>
<dbReference type="HAMAP" id="MF_01525">
    <property type="entry name" value="CaiE"/>
    <property type="match status" value="1"/>
</dbReference>
<dbReference type="InterPro" id="IPR023446">
    <property type="entry name" value="CaiE"/>
</dbReference>
<dbReference type="InterPro" id="IPR001451">
    <property type="entry name" value="Hexapep"/>
</dbReference>
<dbReference type="InterPro" id="IPR050484">
    <property type="entry name" value="Transf_Hexapept/Carb_Anhydrase"/>
</dbReference>
<dbReference type="InterPro" id="IPR011004">
    <property type="entry name" value="Trimer_LpxA-like_sf"/>
</dbReference>
<dbReference type="NCBIfam" id="NF010150">
    <property type="entry name" value="PRK13627.1"/>
    <property type="match status" value="1"/>
</dbReference>
<dbReference type="PANTHER" id="PTHR13061">
    <property type="entry name" value="DYNACTIN SUBUNIT P25"/>
    <property type="match status" value="1"/>
</dbReference>
<dbReference type="PANTHER" id="PTHR13061:SF29">
    <property type="entry name" value="GAMMA CARBONIC ANHYDRASE-LIKE 1, MITOCHONDRIAL-RELATED"/>
    <property type="match status" value="1"/>
</dbReference>
<dbReference type="Pfam" id="PF00132">
    <property type="entry name" value="Hexapep"/>
    <property type="match status" value="2"/>
</dbReference>
<dbReference type="SUPFAM" id="SSF51161">
    <property type="entry name" value="Trimeric LpxA-like enzymes"/>
    <property type="match status" value="1"/>
</dbReference>
<name>CAIE_SALEP</name>
<sequence>MSYYAFEGLIPVVHPDAFVHPSAVLIGDVIVGAGVYIGPLASLRGDYGRLILEAGSNLQDGCIMHGYCDTDTIVHENGHIGHGAILHGCVVGRDALVGMNSVIMDGAVIGEESIVAAMSFVKAGFQGEARQLLVGSPARVLRQVTDQELHWKRLNTKEYQDLAIRCRTGLSETKPLTQVEENRPRLKGTTDVKPKSAQ</sequence>
<proteinExistence type="inferred from homology"/>
<comment type="function">
    <text evidence="1">Overproduction of CaiE stimulates the activity of CaiB and CaiD.</text>
</comment>
<comment type="pathway">
    <text evidence="1">Amine and polyamine metabolism; carnitine metabolism.</text>
</comment>
<comment type="similarity">
    <text evidence="1">Belongs to the transferase hexapeptide repeat family.</text>
</comment>
<gene>
    <name evidence="1" type="primary">caiE</name>
    <name type="ordered locus">SEN0069</name>
</gene>
<protein>
    <recommendedName>
        <fullName evidence="1">Carnitine operon protein CaiE</fullName>
    </recommendedName>
</protein>
<keyword id="KW-0677">Repeat</keyword>
<keyword id="KW-0808">Transferase</keyword>
<evidence type="ECO:0000255" key="1">
    <source>
        <dbReference type="HAMAP-Rule" id="MF_01525"/>
    </source>
</evidence>
<evidence type="ECO:0000256" key="2">
    <source>
        <dbReference type="SAM" id="MobiDB-lite"/>
    </source>
</evidence>
<feature type="chain" id="PRO_1000200932" description="Carnitine operon protein CaiE">
    <location>
        <begin position="1"/>
        <end position="198"/>
    </location>
</feature>
<feature type="region of interest" description="Disordered" evidence="2">
    <location>
        <begin position="179"/>
        <end position="198"/>
    </location>
</feature>
<feature type="compositionally biased region" description="Basic and acidic residues" evidence="2">
    <location>
        <begin position="180"/>
        <end position="198"/>
    </location>
</feature>